<dbReference type="EMBL" id="CP001364">
    <property type="protein sequence ID" value="ACM54381.1"/>
    <property type="molecule type" value="Genomic_DNA"/>
</dbReference>
<dbReference type="SMR" id="B9LLZ7"/>
<dbReference type="KEGG" id="chl:Chy400_2999"/>
<dbReference type="HOGENOM" id="CLU_126929_3_0_0"/>
<dbReference type="OrthoDB" id="9800361at2"/>
<dbReference type="GO" id="GO:0016151">
    <property type="term" value="F:nickel cation binding"/>
    <property type="evidence" value="ECO:0007669"/>
    <property type="project" value="UniProtKB-UniRule"/>
</dbReference>
<dbReference type="GO" id="GO:0008270">
    <property type="term" value="F:zinc ion binding"/>
    <property type="evidence" value="ECO:0007669"/>
    <property type="project" value="UniProtKB-UniRule"/>
</dbReference>
<dbReference type="GO" id="GO:0051604">
    <property type="term" value="P:protein maturation"/>
    <property type="evidence" value="ECO:0007669"/>
    <property type="project" value="InterPro"/>
</dbReference>
<dbReference type="GO" id="GO:0036211">
    <property type="term" value="P:protein modification process"/>
    <property type="evidence" value="ECO:0007669"/>
    <property type="project" value="UniProtKB-UniRule"/>
</dbReference>
<dbReference type="Gene3D" id="3.30.2320.80">
    <property type="match status" value="1"/>
</dbReference>
<dbReference type="HAMAP" id="MF_00213">
    <property type="entry name" value="HypA_HybF"/>
    <property type="match status" value="1"/>
</dbReference>
<dbReference type="InterPro" id="IPR020538">
    <property type="entry name" value="Hydgase_Ni_incorp_HypA/HybF_CS"/>
</dbReference>
<dbReference type="InterPro" id="IPR000688">
    <property type="entry name" value="HypA/HybF"/>
</dbReference>
<dbReference type="NCBIfam" id="TIGR00100">
    <property type="entry name" value="hypA"/>
    <property type="match status" value="1"/>
</dbReference>
<dbReference type="PANTHER" id="PTHR34535">
    <property type="entry name" value="HYDROGENASE MATURATION FACTOR HYPA"/>
    <property type="match status" value="1"/>
</dbReference>
<dbReference type="PANTHER" id="PTHR34535:SF3">
    <property type="entry name" value="HYDROGENASE MATURATION FACTOR HYPA"/>
    <property type="match status" value="1"/>
</dbReference>
<dbReference type="Pfam" id="PF01155">
    <property type="entry name" value="HypA"/>
    <property type="match status" value="1"/>
</dbReference>
<dbReference type="PIRSF" id="PIRSF004761">
    <property type="entry name" value="Hydrgn_mat_HypA"/>
    <property type="match status" value="1"/>
</dbReference>
<dbReference type="PROSITE" id="PS01249">
    <property type="entry name" value="HYPA"/>
    <property type="match status" value="1"/>
</dbReference>
<keyword id="KW-0479">Metal-binding</keyword>
<keyword id="KW-0533">Nickel</keyword>
<keyword id="KW-0862">Zinc</keyword>
<accession>B9LLZ7</accession>
<feature type="chain" id="PRO_1000124773" description="Hydrogenase maturation factor HypA">
    <location>
        <begin position="1"/>
        <end position="114"/>
    </location>
</feature>
<feature type="binding site" evidence="1">
    <location>
        <position position="2"/>
    </location>
    <ligand>
        <name>Ni(2+)</name>
        <dbReference type="ChEBI" id="CHEBI:49786"/>
    </ligand>
</feature>
<feature type="binding site" evidence="1">
    <location>
        <position position="73"/>
    </location>
    <ligand>
        <name>Zn(2+)</name>
        <dbReference type="ChEBI" id="CHEBI:29105"/>
    </ligand>
</feature>
<feature type="binding site" evidence="1">
    <location>
        <position position="76"/>
    </location>
    <ligand>
        <name>Zn(2+)</name>
        <dbReference type="ChEBI" id="CHEBI:29105"/>
    </ligand>
</feature>
<feature type="binding site" evidence="1">
    <location>
        <position position="90"/>
    </location>
    <ligand>
        <name>Zn(2+)</name>
        <dbReference type="ChEBI" id="CHEBI:29105"/>
    </ligand>
</feature>
<feature type="binding site" evidence="1">
    <location>
        <position position="93"/>
    </location>
    <ligand>
        <name>Zn(2+)</name>
        <dbReference type="ChEBI" id="CHEBI:29105"/>
    </ligand>
</feature>
<sequence length="114" mass="12054">MHELSIAHNIVTIASDAAAEAGVDRISAVHLRIGALAGVVADALRFSFAIAAEGTPLAGAELIIEEVPVVVFCPDCNAEVTLTNPRLFRCPRCDRPCGQIVHGRELELVALETP</sequence>
<proteinExistence type="inferred from homology"/>
<evidence type="ECO:0000255" key="1">
    <source>
        <dbReference type="HAMAP-Rule" id="MF_00213"/>
    </source>
</evidence>
<organism>
    <name type="scientific">Chloroflexus aurantiacus (strain ATCC 29364 / DSM 637 / Y-400-fl)</name>
    <dbReference type="NCBI Taxonomy" id="480224"/>
    <lineage>
        <taxon>Bacteria</taxon>
        <taxon>Bacillati</taxon>
        <taxon>Chloroflexota</taxon>
        <taxon>Chloroflexia</taxon>
        <taxon>Chloroflexales</taxon>
        <taxon>Chloroflexineae</taxon>
        <taxon>Chloroflexaceae</taxon>
        <taxon>Chloroflexus</taxon>
    </lineage>
</organism>
<name>HYPA_CHLSY</name>
<protein>
    <recommendedName>
        <fullName evidence="1">Hydrogenase maturation factor HypA</fullName>
    </recommendedName>
</protein>
<comment type="function">
    <text evidence="1">Involved in the maturation of [NiFe] hydrogenases. Required for nickel insertion into the metal center of the hydrogenase.</text>
</comment>
<comment type="similarity">
    <text evidence="1">Belongs to the HypA/HybF family.</text>
</comment>
<reference key="1">
    <citation type="submission" date="2009-01" db="EMBL/GenBank/DDBJ databases">
        <title>Complete sequence of Chloroflexus sp. Y-400-fl.</title>
        <authorList>
            <consortium name="US DOE Joint Genome Institute"/>
            <person name="Lucas S."/>
            <person name="Copeland A."/>
            <person name="Lapidus A."/>
            <person name="Glavina del Rio T."/>
            <person name="Dalin E."/>
            <person name="Tice H."/>
            <person name="Bruce D."/>
            <person name="Goodwin L."/>
            <person name="Pitluck S."/>
            <person name="Sims D."/>
            <person name="Kiss H."/>
            <person name="Brettin T."/>
            <person name="Detter J.C."/>
            <person name="Han C."/>
            <person name="Larimer F."/>
            <person name="Land M."/>
            <person name="Hauser L."/>
            <person name="Kyrpides N."/>
            <person name="Ovchinnikova G."/>
            <person name="Bryant D.A."/>
            <person name="Richardson P."/>
        </authorList>
    </citation>
    <scope>NUCLEOTIDE SEQUENCE [LARGE SCALE GENOMIC DNA]</scope>
    <source>
        <strain>ATCC 29364 / DSM 637 / Y-400-fl</strain>
    </source>
</reference>
<gene>
    <name evidence="1" type="primary">hypA</name>
    <name type="ordered locus">Chy400_2999</name>
</gene>